<dbReference type="EMBL" id="AB168527">
    <property type="protein sequence ID" value="BAE00645.1"/>
    <property type="molecule type" value="mRNA"/>
</dbReference>
<dbReference type="RefSeq" id="NP_001270111.1">
    <property type="nucleotide sequence ID" value="NM_001283182.1"/>
</dbReference>
<dbReference type="BMRB" id="Q4R8C7"/>
<dbReference type="SMR" id="Q4R8C7"/>
<dbReference type="eggNOG" id="ENOG502QSD5">
    <property type="taxonomic scope" value="Eukaryota"/>
</dbReference>
<dbReference type="Proteomes" id="UP000233100">
    <property type="component" value="Unplaced"/>
</dbReference>
<dbReference type="GO" id="GO:0016020">
    <property type="term" value="C:membrane"/>
    <property type="evidence" value="ECO:0007669"/>
    <property type="project" value="TreeGrafter"/>
</dbReference>
<dbReference type="GO" id="GO:0035091">
    <property type="term" value="F:phosphatidylinositol binding"/>
    <property type="evidence" value="ECO:0007669"/>
    <property type="project" value="TreeGrafter"/>
</dbReference>
<dbReference type="GO" id="GO:0048264">
    <property type="term" value="P:determination of ventral identity"/>
    <property type="evidence" value="ECO:0007669"/>
    <property type="project" value="TreeGrafter"/>
</dbReference>
<dbReference type="GO" id="GO:0009953">
    <property type="term" value="P:dorsal/ventral pattern formation"/>
    <property type="evidence" value="ECO:0000250"/>
    <property type="project" value="UniProtKB"/>
</dbReference>
<dbReference type="GO" id="GO:0046329">
    <property type="term" value="P:negative regulation of JNK cascade"/>
    <property type="evidence" value="ECO:0000250"/>
    <property type="project" value="UniProtKB"/>
</dbReference>
<dbReference type="GO" id="GO:0031333">
    <property type="term" value="P:negative regulation of protein-containing complex assembly"/>
    <property type="evidence" value="ECO:0000250"/>
    <property type="project" value="UniProtKB"/>
</dbReference>
<dbReference type="FunFam" id="1.20.120.360:FF:000002">
    <property type="entry name" value="Axin interactor, dorsalization associated"/>
    <property type="match status" value="1"/>
</dbReference>
<dbReference type="FunFam" id="2.60.40.150:FF:000059">
    <property type="entry name" value="Axin interactor, dorsalization-associated protein"/>
    <property type="match status" value="1"/>
</dbReference>
<dbReference type="Gene3D" id="1.20.120.360">
    <property type="entry name" value="Axin interactor, dorsalization-associated protein, N-terminal domain"/>
    <property type="match status" value="1"/>
</dbReference>
<dbReference type="Gene3D" id="2.60.40.150">
    <property type="entry name" value="C2 domain"/>
    <property type="match status" value="1"/>
</dbReference>
<dbReference type="InterPro" id="IPR025939">
    <property type="entry name" value="Aida_C"/>
</dbReference>
<dbReference type="InterPro" id="IPR023421">
    <property type="entry name" value="AIDA_N"/>
</dbReference>
<dbReference type="InterPro" id="IPR036818">
    <property type="entry name" value="AIDA_N_sf"/>
</dbReference>
<dbReference type="InterPro" id="IPR035892">
    <property type="entry name" value="C2_domain_sf"/>
</dbReference>
<dbReference type="PANTHER" id="PTHR28654">
    <property type="entry name" value="AXIN INTERACTOR, DORSALIZATION-ASSOCIATED PROTEIN"/>
    <property type="match status" value="1"/>
</dbReference>
<dbReference type="PANTHER" id="PTHR28654:SF1">
    <property type="entry name" value="AXIN INTERACTOR, DORSALIZATION-ASSOCIATED PROTEIN"/>
    <property type="match status" value="1"/>
</dbReference>
<dbReference type="Pfam" id="PF14186">
    <property type="entry name" value="Aida_C2"/>
    <property type="match status" value="1"/>
</dbReference>
<dbReference type="Pfam" id="PF08910">
    <property type="entry name" value="Aida_N"/>
    <property type="match status" value="1"/>
</dbReference>
<dbReference type="SUPFAM" id="SSF109779">
    <property type="entry name" value="Domain from hypothetical 2610208m17rik protein"/>
    <property type="match status" value="1"/>
</dbReference>
<dbReference type="PROSITE" id="PS51911">
    <property type="entry name" value="C2_AIDA"/>
    <property type="match status" value="1"/>
</dbReference>
<gene>
    <name type="primary">AIDA</name>
    <name type="ORF">QtsA-12796</name>
</gene>
<evidence type="ECO:0000250" key="1"/>
<evidence type="ECO:0000250" key="2">
    <source>
        <dbReference type="UniProtKB" id="Q96BJ3"/>
    </source>
</evidence>
<evidence type="ECO:0000255" key="3">
    <source>
        <dbReference type="PROSITE-ProRule" id="PRU01259"/>
    </source>
</evidence>
<evidence type="ECO:0000256" key="4">
    <source>
        <dbReference type="SAM" id="MobiDB-lite"/>
    </source>
</evidence>
<evidence type="ECO:0000305" key="5"/>
<protein>
    <recommendedName>
        <fullName>Axin interactor, dorsalization-associated protein</fullName>
    </recommendedName>
    <alternativeName>
        <fullName>Axin interaction partner and dorsalization antagonist</fullName>
    </alternativeName>
</protein>
<sequence>MFSSYRLARHLQKEAQAQHNNSEFTEEQKKTIGKIATCLELRSAALQSTQSQEEFKLEDLKKLEPILKNILTYNKEFPFDVQPVPLRRILAPGEEENLEFEEDEEEGGAGAGSPDSFPARVPGTLLPRLPSEPGMTLLTIRIEKIGLKDAGQCIDPYITVSVKDLNGIDLTPVQDTPVASRKEDTYVHFNVDIELQKHVEKLTKGAAIFFEFKHYKPKKRFTSTKCFAFMEMDEIKPGPIVIELYKKPTDFKRKKLQLLTKKPLYLHLHQTLHKE</sequence>
<proteinExistence type="evidence at transcript level"/>
<name>AIDA_MACFA</name>
<organism>
    <name type="scientific">Macaca fascicularis</name>
    <name type="common">Crab-eating macaque</name>
    <name type="synonym">Cynomolgus monkey</name>
    <dbReference type="NCBI Taxonomy" id="9541"/>
    <lineage>
        <taxon>Eukaryota</taxon>
        <taxon>Metazoa</taxon>
        <taxon>Chordata</taxon>
        <taxon>Craniata</taxon>
        <taxon>Vertebrata</taxon>
        <taxon>Euteleostomi</taxon>
        <taxon>Mammalia</taxon>
        <taxon>Eutheria</taxon>
        <taxon>Euarchontoglires</taxon>
        <taxon>Primates</taxon>
        <taxon>Haplorrhini</taxon>
        <taxon>Catarrhini</taxon>
        <taxon>Cercopithecidae</taxon>
        <taxon>Cercopithecinae</taxon>
        <taxon>Macaca</taxon>
    </lineage>
</organism>
<accession>Q4R8C7</accession>
<reference key="1">
    <citation type="submission" date="2005-06" db="EMBL/GenBank/DDBJ databases">
        <title>DNA sequences of macaque genes expressed in brain or testis and its evolutionary implications.</title>
        <authorList>
            <consortium name="International consortium for macaque cDNA sequencing and analysis"/>
        </authorList>
    </citation>
    <scope>NUCLEOTIDE SEQUENCE [LARGE SCALE MRNA]</scope>
    <source>
        <tissue>Testis</tissue>
    </source>
</reference>
<comment type="function">
    <text evidence="1">Acts as a ventralizing factor during embryogenesis. Inhibits axin-mediated JNK activation by binding axin and disrupting axin homodimerization. This in turn antagonizes a Wnt/beta-catenin-independent dorsalization pathway activated by AXIN/JNK-signaling (By similarity).</text>
</comment>
<comment type="subunit">
    <text evidence="1">Interacts with AXIN1.</text>
</comment>
<comment type="similarity">
    <text evidence="3 5">Belongs to the AIDA family.</text>
</comment>
<feature type="chain" id="PRO_0000305278" description="Axin interactor, dorsalization-associated protein">
    <location>
        <begin position="1"/>
        <end position="275"/>
    </location>
</feature>
<feature type="domain" description="C2 Aida-type" evidence="3">
    <location>
        <begin position="126"/>
        <end position="273"/>
    </location>
</feature>
<feature type="region of interest" description="Disordered" evidence="4">
    <location>
        <begin position="97"/>
        <end position="125"/>
    </location>
</feature>
<feature type="region of interest" description="Axin-binding" evidence="1">
    <location>
        <begin position="123"/>
        <end position="190"/>
    </location>
</feature>
<feature type="compositionally biased region" description="Acidic residues" evidence="4">
    <location>
        <begin position="97"/>
        <end position="107"/>
    </location>
</feature>
<feature type="modified residue" description="Phosphoserine" evidence="2">
    <location>
        <position position="113"/>
    </location>
</feature>
<keyword id="KW-0217">Developmental protein</keyword>
<keyword id="KW-0597">Phosphoprotein</keyword>
<keyword id="KW-1185">Reference proteome</keyword>